<accession>Q74AB0</accession>
<proteinExistence type="inferred from homology"/>
<reference key="1">
    <citation type="journal article" date="2003" name="Science">
        <title>Genome of Geobacter sulfurreducens: metal reduction in subsurface environments.</title>
        <authorList>
            <person name="Methe B.A."/>
            <person name="Nelson K.E."/>
            <person name="Eisen J.A."/>
            <person name="Paulsen I.T."/>
            <person name="Nelson W.C."/>
            <person name="Heidelberg J.F."/>
            <person name="Wu D."/>
            <person name="Wu M."/>
            <person name="Ward N.L."/>
            <person name="Beanan M.J."/>
            <person name="Dodson R.J."/>
            <person name="Madupu R."/>
            <person name="Brinkac L.M."/>
            <person name="Daugherty S.C."/>
            <person name="DeBoy R.T."/>
            <person name="Durkin A.S."/>
            <person name="Gwinn M.L."/>
            <person name="Kolonay J.F."/>
            <person name="Sullivan S.A."/>
            <person name="Haft D.H."/>
            <person name="Selengut J."/>
            <person name="Davidsen T.M."/>
            <person name="Zafar N."/>
            <person name="White O."/>
            <person name="Tran B."/>
            <person name="Romero C."/>
            <person name="Forberger H.A."/>
            <person name="Weidman J.F."/>
            <person name="Khouri H.M."/>
            <person name="Feldblyum T.V."/>
            <person name="Utterback T.R."/>
            <person name="Van Aken S.E."/>
            <person name="Lovley D.R."/>
            <person name="Fraser C.M."/>
        </authorList>
    </citation>
    <scope>NUCLEOTIDE SEQUENCE [LARGE SCALE GENOMIC DNA]</scope>
    <source>
        <strain>ATCC 51573 / DSM 12127 / PCA</strain>
    </source>
</reference>
<gene>
    <name evidence="1" type="primary">kdpA</name>
    <name type="ordered locus">GSU2480</name>
</gene>
<name>KDPA_GEOSL</name>
<feature type="chain" id="PRO_0000166499" description="Potassium-transporting ATPase potassium-binding subunit">
    <location>
        <begin position="1"/>
        <end position="592"/>
    </location>
</feature>
<feature type="transmembrane region" description="Helical" evidence="1">
    <location>
        <begin position="7"/>
        <end position="27"/>
    </location>
</feature>
<feature type="transmembrane region" description="Helical" evidence="1">
    <location>
        <begin position="71"/>
        <end position="91"/>
    </location>
</feature>
<feature type="transmembrane region" description="Helical" evidence="1">
    <location>
        <begin position="136"/>
        <end position="156"/>
    </location>
</feature>
<feature type="transmembrane region" description="Helical" evidence="1">
    <location>
        <begin position="179"/>
        <end position="199"/>
    </location>
</feature>
<feature type="transmembrane region" description="Helical" evidence="1">
    <location>
        <begin position="287"/>
        <end position="307"/>
    </location>
</feature>
<feature type="transmembrane region" description="Helical" evidence="1">
    <location>
        <begin position="314"/>
        <end position="334"/>
    </location>
</feature>
<feature type="transmembrane region" description="Helical" evidence="1">
    <location>
        <begin position="411"/>
        <end position="431"/>
    </location>
</feature>
<feature type="transmembrane region" description="Helical" evidence="1">
    <location>
        <begin position="449"/>
        <end position="469"/>
    </location>
</feature>
<feature type="transmembrane region" description="Helical" evidence="1">
    <location>
        <begin position="473"/>
        <end position="493"/>
    </location>
</feature>
<feature type="transmembrane region" description="Helical" evidence="1">
    <location>
        <begin position="515"/>
        <end position="535"/>
    </location>
</feature>
<feature type="transmembrane region" description="Helical" evidence="1">
    <location>
        <begin position="559"/>
        <end position="579"/>
    </location>
</feature>
<comment type="function">
    <text evidence="1">Part of the high-affinity ATP-driven potassium transport (or Kdp) system, which catalyzes the hydrolysis of ATP coupled with the electrogenic transport of potassium into the cytoplasm. This subunit binds the periplasmic potassium ions and delivers the ions to the membrane domain of KdpB through an intramembrane tunnel.</text>
</comment>
<comment type="subunit">
    <text evidence="1">The system is composed of three essential subunits: KdpA, KdpB and KdpC.</text>
</comment>
<comment type="subcellular location">
    <subcellularLocation>
        <location evidence="1">Cell inner membrane</location>
        <topology evidence="1">Multi-pass membrane protein</topology>
    </subcellularLocation>
</comment>
<comment type="similarity">
    <text evidence="1">Belongs to the KdpA family.</text>
</comment>
<protein>
    <recommendedName>
        <fullName evidence="1">Potassium-transporting ATPase potassium-binding subunit</fullName>
    </recommendedName>
    <alternativeName>
        <fullName evidence="1">ATP phosphohydrolase [potassium-transporting] A chain</fullName>
    </alternativeName>
    <alternativeName>
        <fullName evidence="1">Potassium-binding and translocating subunit A</fullName>
    </alternativeName>
    <alternativeName>
        <fullName evidence="1">Potassium-translocating ATPase A chain</fullName>
    </alternativeName>
</protein>
<sequence>MNVYESLQTVLLFVVLLAMVKPLGTFMARVFQGERTILSPVLAPAESLLYGVCGVNSEEEMDWKRYARAMVLFNLVIFATLFAMLMLQHLLPLNPQKFPAFSWQLALNTAVSFTTNTNWQAYAGEQAASYFTQMVGLTVHNFVSAATGIAVAIAVIRGFARRTTSALGNFWVDLTRATLYILVPISLIAALVLVSQGVIQNFSAYQAVSLVQPVTYDTPKRDGTGSPVKDPTGNPVTERVTAKEVTIPMGPVASQEAIKELGTNGGGFFNANSAHPFENPTPLSNMLEILLILLIPFSLTYTFGAMVGNTRQGWTLLGVMLLILLASFAVLQGVESGGNPLVTKLGVHGANMEGKDTRFGLAGSSLFTVATTGTSCGAVNTMHDSLTPIGGMIPMSLMLLGELVPGGVGSGLYTMLAFAVIAVFVSGLMIGRTPEYLGKKIEVREMWMSVVTVLAAGVMVLILSGIAMISPSAVAAMANPGAHGLSEVLYAFASMANNNGSAFAGLSANTTFYNILGALAMIVGRFAPAVAVLAMAGSLAEKKYVPPSLGTLPTDKVPFALWLTLVILIVGALTFFPALSLGPIVEHLTMTM</sequence>
<keyword id="KW-0997">Cell inner membrane</keyword>
<keyword id="KW-1003">Cell membrane</keyword>
<keyword id="KW-0406">Ion transport</keyword>
<keyword id="KW-0472">Membrane</keyword>
<keyword id="KW-0630">Potassium</keyword>
<keyword id="KW-0633">Potassium transport</keyword>
<keyword id="KW-1185">Reference proteome</keyword>
<keyword id="KW-0812">Transmembrane</keyword>
<keyword id="KW-1133">Transmembrane helix</keyword>
<keyword id="KW-0813">Transport</keyword>
<organism>
    <name type="scientific">Geobacter sulfurreducens (strain ATCC 51573 / DSM 12127 / PCA)</name>
    <dbReference type="NCBI Taxonomy" id="243231"/>
    <lineage>
        <taxon>Bacteria</taxon>
        <taxon>Pseudomonadati</taxon>
        <taxon>Thermodesulfobacteriota</taxon>
        <taxon>Desulfuromonadia</taxon>
        <taxon>Geobacterales</taxon>
        <taxon>Geobacteraceae</taxon>
        <taxon>Geobacter</taxon>
    </lineage>
</organism>
<dbReference type="EMBL" id="AE017180">
    <property type="protein sequence ID" value="AAR35853.1"/>
    <property type="molecule type" value="Genomic_DNA"/>
</dbReference>
<dbReference type="RefSeq" id="NP_953526.1">
    <property type="nucleotide sequence ID" value="NC_002939.5"/>
</dbReference>
<dbReference type="RefSeq" id="WP_010943117.1">
    <property type="nucleotide sequence ID" value="NC_002939.5"/>
</dbReference>
<dbReference type="SMR" id="Q74AB0"/>
<dbReference type="FunCoup" id="Q74AB0">
    <property type="interactions" value="215"/>
</dbReference>
<dbReference type="STRING" id="243231.GSU2480"/>
<dbReference type="EnsemblBacteria" id="AAR35853">
    <property type="protein sequence ID" value="AAR35853"/>
    <property type="gene ID" value="GSU2480"/>
</dbReference>
<dbReference type="KEGG" id="gsu:GSU2480"/>
<dbReference type="PATRIC" id="fig|243231.5.peg.2505"/>
<dbReference type="eggNOG" id="COG2060">
    <property type="taxonomic scope" value="Bacteria"/>
</dbReference>
<dbReference type="HOGENOM" id="CLU_018614_3_0_7"/>
<dbReference type="InParanoid" id="Q74AB0"/>
<dbReference type="OrthoDB" id="9763796at2"/>
<dbReference type="Proteomes" id="UP000000577">
    <property type="component" value="Chromosome"/>
</dbReference>
<dbReference type="GO" id="GO:0005886">
    <property type="term" value="C:plasma membrane"/>
    <property type="evidence" value="ECO:0000318"/>
    <property type="project" value="GO_Central"/>
</dbReference>
<dbReference type="GO" id="GO:0008556">
    <property type="term" value="F:P-type potassium transmembrane transporter activity"/>
    <property type="evidence" value="ECO:0000318"/>
    <property type="project" value="GO_Central"/>
</dbReference>
<dbReference type="GO" id="GO:0030955">
    <property type="term" value="F:potassium ion binding"/>
    <property type="evidence" value="ECO:0007669"/>
    <property type="project" value="UniProtKB-UniRule"/>
</dbReference>
<dbReference type="GO" id="GO:0071805">
    <property type="term" value="P:potassium ion transmembrane transport"/>
    <property type="evidence" value="ECO:0000318"/>
    <property type="project" value="GO_Central"/>
</dbReference>
<dbReference type="HAMAP" id="MF_00275">
    <property type="entry name" value="KdpA"/>
    <property type="match status" value="1"/>
</dbReference>
<dbReference type="InterPro" id="IPR004623">
    <property type="entry name" value="KdpA"/>
</dbReference>
<dbReference type="NCBIfam" id="TIGR00680">
    <property type="entry name" value="kdpA"/>
    <property type="match status" value="1"/>
</dbReference>
<dbReference type="PANTHER" id="PTHR30607">
    <property type="entry name" value="POTASSIUM-TRANSPORTING ATPASE A CHAIN"/>
    <property type="match status" value="1"/>
</dbReference>
<dbReference type="PANTHER" id="PTHR30607:SF2">
    <property type="entry name" value="POTASSIUM-TRANSPORTING ATPASE POTASSIUM-BINDING SUBUNIT"/>
    <property type="match status" value="1"/>
</dbReference>
<dbReference type="Pfam" id="PF03814">
    <property type="entry name" value="KdpA"/>
    <property type="match status" value="1"/>
</dbReference>
<dbReference type="PIRSF" id="PIRSF001294">
    <property type="entry name" value="K_ATPaseA"/>
    <property type="match status" value="1"/>
</dbReference>
<evidence type="ECO:0000255" key="1">
    <source>
        <dbReference type="HAMAP-Rule" id="MF_00275"/>
    </source>
</evidence>